<comment type="function">
    <text evidence="2">With CysD forms the ATP sulfurylase (ATPS) that catalyzes the adenylation of sulfate producing adenosine 5'-phosphosulfate (APS) and diphosphate, the first enzymatic step in sulfur assimilation pathway. APS synthesis involves the formation of a high-energy phosphoric-sulfuric acid anhydride bond driven by GTP hydrolysis by CysN coupled to ATP hydrolysis by CysD.</text>
</comment>
<comment type="catalytic activity">
    <reaction evidence="2">
        <text>sulfate + ATP + H(+) = adenosine 5'-phosphosulfate + diphosphate</text>
        <dbReference type="Rhea" id="RHEA:18133"/>
        <dbReference type="ChEBI" id="CHEBI:15378"/>
        <dbReference type="ChEBI" id="CHEBI:16189"/>
        <dbReference type="ChEBI" id="CHEBI:30616"/>
        <dbReference type="ChEBI" id="CHEBI:33019"/>
        <dbReference type="ChEBI" id="CHEBI:58243"/>
        <dbReference type="EC" id="2.7.7.4"/>
    </reaction>
</comment>
<comment type="pathway">
    <text evidence="2">Sulfur metabolism; hydrogen sulfide biosynthesis; sulfite from sulfate: step 1/3.</text>
</comment>
<comment type="subunit">
    <text evidence="2">Heterodimer composed of CysD, the smaller subunit, and CysN.</text>
</comment>
<comment type="similarity">
    <text evidence="2">Belongs to the TRAFAC class translation factor GTPase superfamily. Classic translation factor GTPase family. CysN/NodQ subfamily.</text>
</comment>
<organism>
    <name type="scientific">Shigella dysenteriae serotype 1 (strain Sd197)</name>
    <dbReference type="NCBI Taxonomy" id="300267"/>
    <lineage>
        <taxon>Bacteria</taxon>
        <taxon>Pseudomonadati</taxon>
        <taxon>Pseudomonadota</taxon>
        <taxon>Gammaproteobacteria</taxon>
        <taxon>Enterobacterales</taxon>
        <taxon>Enterobacteriaceae</taxon>
        <taxon>Shigella</taxon>
    </lineage>
</organism>
<reference key="1">
    <citation type="journal article" date="2005" name="Nucleic Acids Res.">
        <title>Genome dynamics and diversity of Shigella species, the etiologic agents of bacillary dysentery.</title>
        <authorList>
            <person name="Yang F."/>
            <person name="Yang J."/>
            <person name="Zhang X."/>
            <person name="Chen L."/>
            <person name="Jiang Y."/>
            <person name="Yan Y."/>
            <person name="Tang X."/>
            <person name="Wang J."/>
            <person name="Xiong Z."/>
            <person name="Dong J."/>
            <person name="Xue Y."/>
            <person name="Zhu Y."/>
            <person name="Xu X."/>
            <person name="Sun L."/>
            <person name="Chen S."/>
            <person name="Nie H."/>
            <person name="Peng J."/>
            <person name="Xu J."/>
            <person name="Wang Y."/>
            <person name="Yuan Z."/>
            <person name="Wen Y."/>
            <person name="Yao Z."/>
            <person name="Shen Y."/>
            <person name="Qiang B."/>
            <person name="Hou Y."/>
            <person name="Yu J."/>
            <person name="Jin Q."/>
        </authorList>
    </citation>
    <scope>NUCLEOTIDE SEQUENCE [LARGE SCALE GENOMIC DNA]</scope>
    <source>
        <strain>Sd197</strain>
    </source>
</reference>
<evidence type="ECO:0000250" key="1"/>
<evidence type="ECO:0000255" key="2">
    <source>
        <dbReference type="HAMAP-Rule" id="MF_00062"/>
    </source>
</evidence>
<proteinExistence type="inferred from homology"/>
<dbReference type="EC" id="2.7.7.4" evidence="2"/>
<dbReference type="EMBL" id="CP000034">
    <property type="protein sequence ID" value="ABB62976.1"/>
    <property type="molecule type" value="Genomic_DNA"/>
</dbReference>
<dbReference type="RefSeq" id="WP_001090340.1">
    <property type="nucleotide sequence ID" value="NC_007606.1"/>
</dbReference>
<dbReference type="RefSeq" id="YP_404467.1">
    <property type="nucleotide sequence ID" value="NC_007606.1"/>
</dbReference>
<dbReference type="SMR" id="Q32CH9"/>
<dbReference type="STRING" id="300267.SDY_2950"/>
<dbReference type="EnsemblBacteria" id="ABB62976">
    <property type="protein sequence ID" value="ABB62976"/>
    <property type="gene ID" value="SDY_2950"/>
</dbReference>
<dbReference type="KEGG" id="sdy:SDY_2950"/>
<dbReference type="PATRIC" id="fig|300267.13.peg.3542"/>
<dbReference type="HOGENOM" id="CLU_007265_5_2_6"/>
<dbReference type="UniPathway" id="UPA00140">
    <property type="reaction ID" value="UER00204"/>
</dbReference>
<dbReference type="Proteomes" id="UP000002716">
    <property type="component" value="Chromosome"/>
</dbReference>
<dbReference type="GO" id="GO:0005524">
    <property type="term" value="F:ATP binding"/>
    <property type="evidence" value="ECO:0007669"/>
    <property type="project" value="UniProtKB-KW"/>
</dbReference>
<dbReference type="GO" id="GO:0005525">
    <property type="term" value="F:GTP binding"/>
    <property type="evidence" value="ECO:0007669"/>
    <property type="project" value="UniProtKB-UniRule"/>
</dbReference>
<dbReference type="GO" id="GO:0003924">
    <property type="term" value="F:GTPase activity"/>
    <property type="evidence" value="ECO:0007669"/>
    <property type="project" value="InterPro"/>
</dbReference>
<dbReference type="GO" id="GO:0004781">
    <property type="term" value="F:sulfate adenylyltransferase (ATP) activity"/>
    <property type="evidence" value="ECO:0007669"/>
    <property type="project" value="UniProtKB-UniRule"/>
</dbReference>
<dbReference type="GO" id="GO:0070814">
    <property type="term" value="P:hydrogen sulfide biosynthetic process"/>
    <property type="evidence" value="ECO:0007669"/>
    <property type="project" value="UniProtKB-UniRule"/>
</dbReference>
<dbReference type="GO" id="GO:0000103">
    <property type="term" value="P:sulfate assimilation"/>
    <property type="evidence" value="ECO:0007669"/>
    <property type="project" value="UniProtKB-UniRule"/>
</dbReference>
<dbReference type="CDD" id="cd04166">
    <property type="entry name" value="CysN_ATPS"/>
    <property type="match status" value="1"/>
</dbReference>
<dbReference type="CDD" id="cd03695">
    <property type="entry name" value="CysN_NodQ_II"/>
    <property type="match status" value="1"/>
</dbReference>
<dbReference type="CDD" id="cd04095">
    <property type="entry name" value="CysN_NoDQ_III"/>
    <property type="match status" value="1"/>
</dbReference>
<dbReference type="FunFam" id="2.40.30.10:FF:000027">
    <property type="entry name" value="Sulfate adenylyltransferase subunit 1"/>
    <property type="match status" value="1"/>
</dbReference>
<dbReference type="FunFam" id="2.40.30.10:FF:000031">
    <property type="entry name" value="Sulfate adenylyltransferase subunit 1"/>
    <property type="match status" value="1"/>
</dbReference>
<dbReference type="FunFam" id="3.40.50.300:FF:000119">
    <property type="entry name" value="Sulfate adenylyltransferase subunit 1"/>
    <property type="match status" value="1"/>
</dbReference>
<dbReference type="Gene3D" id="3.40.50.300">
    <property type="entry name" value="P-loop containing nucleotide triphosphate hydrolases"/>
    <property type="match status" value="1"/>
</dbReference>
<dbReference type="Gene3D" id="2.40.30.10">
    <property type="entry name" value="Translation factors"/>
    <property type="match status" value="2"/>
</dbReference>
<dbReference type="HAMAP" id="MF_00062">
    <property type="entry name" value="Sulf_adenylyltr_sub1"/>
    <property type="match status" value="1"/>
</dbReference>
<dbReference type="InterPro" id="IPR041757">
    <property type="entry name" value="CysN_GTP-bd"/>
</dbReference>
<dbReference type="InterPro" id="IPR044138">
    <property type="entry name" value="CysN_II"/>
</dbReference>
<dbReference type="InterPro" id="IPR044139">
    <property type="entry name" value="CysN_NoDQ_III"/>
</dbReference>
<dbReference type="InterPro" id="IPR031157">
    <property type="entry name" value="G_TR_CS"/>
</dbReference>
<dbReference type="InterPro" id="IPR054696">
    <property type="entry name" value="GTP-eEF1A_C"/>
</dbReference>
<dbReference type="InterPro" id="IPR027417">
    <property type="entry name" value="P-loop_NTPase"/>
</dbReference>
<dbReference type="InterPro" id="IPR005225">
    <property type="entry name" value="Small_GTP-bd"/>
</dbReference>
<dbReference type="InterPro" id="IPR011779">
    <property type="entry name" value="SO4_adenylTrfase_lsu"/>
</dbReference>
<dbReference type="InterPro" id="IPR000795">
    <property type="entry name" value="T_Tr_GTP-bd_dom"/>
</dbReference>
<dbReference type="InterPro" id="IPR050100">
    <property type="entry name" value="TRAFAC_GTPase_members"/>
</dbReference>
<dbReference type="InterPro" id="IPR009000">
    <property type="entry name" value="Transl_B-barrel_sf"/>
</dbReference>
<dbReference type="InterPro" id="IPR009001">
    <property type="entry name" value="Transl_elong_EF1A/Init_IF2_C"/>
</dbReference>
<dbReference type="NCBIfam" id="TIGR02034">
    <property type="entry name" value="CysN"/>
    <property type="match status" value="1"/>
</dbReference>
<dbReference type="NCBIfam" id="NF003478">
    <property type="entry name" value="PRK05124.1"/>
    <property type="match status" value="1"/>
</dbReference>
<dbReference type="NCBIfam" id="TIGR00231">
    <property type="entry name" value="small_GTP"/>
    <property type="match status" value="1"/>
</dbReference>
<dbReference type="PANTHER" id="PTHR23115">
    <property type="entry name" value="TRANSLATION FACTOR"/>
    <property type="match status" value="1"/>
</dbReference>
<dbReference type="Pfam" id="PF22594">
    <property type="entry name" value="GTP-eEF1A_C"/>
    <property type="match status" value="1"/>
</dbReference>
<dbReference type="Pfam" id="PF00009">
    <property type="entry name" value="GTP_EFTU"/>
    <property type="match status" value="1"/>
</dbReference>
<dbReference type="PRINTS" id="PR00315">
    <property type="entry name" value="ELONGATNFCT"/>
</dbReference>
<dbReference type="SUPFAM" id="SSF50465">
    <property type="entry name" value="EF-Tu/eEF-1alpha/eIF2-gamma C-terminal domain"/>
    <property type="match status" value="1"/>
</dbReference>
<dbReference type="SUPFAM" id="SSF52540">
    <property type="entry name" value="P-loop containing nucleoside triphosphate hydrolases"/>
    <property type="match status" value="1"/>
</dbReference>
<dbReference type="SUPFAM" id="SSF50447">
    <property type="entry name" value="Translation proteins"/>
    <property type="match status" value="1"/>
</dbReference>
<dbReference type="PROSITE" id="PS00301">
    <property type="entry name" value="G_TR_1"/>
    <property type="match status" value="1"/>
</dbReference>
<dbReference type="PROSITE" id="PS51722">
    <property type="entry name" value="G_TR_2"/>
    <property type="match status" value="1"/>
</dbReference>
<name>CYSN_SHIDS</name>
<accession>Q32CH9</accession>
<keyword id="KW-0067">ATP-binding</keyword>
<keyword id="KW-0342">GTP-binding</keyword>
<keyword id="KW-0547">Nucleotide-binding</keyword>
<keyword id="KW-0548">Nucleotidyltransferase</keyword>
<keyword id="KW-1185">Reference proteome</keyword>
<keyword id="KW-0808">Transferase</keyword>
<protein>
    <recommendedName>
        <fullName evidence="2">Sulfate adenylyltransferase subunit 1</fullName>
        <ecNumber evidence="2">2.7.7.4</ecNumber>
    </recommendedName>
    <alternativeName>
        <fullName evidence="2">ATP-sulfurylase large subunit</fullName>
    </alternativeName>
    <alternativeName>
        <fullName evidence="2">Sulfate adenylate transferase</fullName>
        <shortName evidence="2">SAT</shortName>
    </alternativeName>
</protein>
<feature type="chain" id="PRO_1000008910" description="Sulfate adenylyltransferase subunit 1">
    <location>
        <begin position="1"/>
        <end position="475"/>
    </location>
</feature>
<feature type="domain" description="tr-type G">
    <location>
        <begin position="25"/>
        <end position="239"/>
    </location>
</feature>
<feature type="region of interest" description="G1" evidence="1">
    <location>
        <begin position="34"/>
        <end position="41"/>
    </location>
</feature>
<feature type="region of interest" description="G2" evidence="1">
    <location>
        <begin position="92"/>
        <end position="96"/>
    </location>
</feature>
<feature type="region of interest" description="G3" evidence="1">
    <location>
        <begin position="113"/>
        <end position="116"/>
    </location>
</feature>
<feature type="region of interest" description="G4" evidence="1">
    <location>
        <begin position="168"/>
        <end position="171"/>
    </location>
</feature>
<feature type="region of interest" description="G5" evidence="1">
    <location>
        <begin position="206"/>
        <end position="208"/>
    </location>
</feature>
<feature type="binding site" evidence="2">
    <location>
        <begin position="34"/>
        <end position="41"/>
    </location>
    <ligand>
        <name>GTP</name>
        <dbReference type="ChEBI" id="CHEBI:37565"/>
    </ligand>
</feature>
<feature type="binding site" evidence="2">
    <location>
        <begin position="113"/>
        <end position="117"/>
    </location>
    <ligand>
        <name>GTP</name>
        <dbReference type="ChEBI" id="CHEBI:37565"/>
    </ligand>
</feature>
<feature type="binding site" evidence="2">
    <location>
        <begin position="168"/>
        <end position="171"/>
    </location>
    <ligand>
        <name>GTP</name>
        <dbReference type="ChEBI" id="CHEBI:37565"/>
    </ligand>
</feature>
<gene>
    <name evidence="2" type="primary">cysN</name>
    <name type="ordered locus">SDY_2950</name>
</gene>
<sequence length="475" mass="52591">MNTALAQQIANEGGVEAWMIAQQHKSLLRFLTCGSVDDGKSTLIGRLLHDTRQIYEDQLSSLHNDSKRHGTQGEKLDLALLVDGLQAEREQGITIDVAYRYFSTEKRKFIIADTPGHEQYTRNMATGASTCELAILLIDARKGVLDQTRRHSFISTLLGIKHLVVAINKMDLMDYSEETFTRIREDYLTFAGQLPGNLDIRFVPLSALEGDNVASQSESMPWYSGPTLLEVLETVEIQRVVDAQPMRFPVQYVNRPNLDFRGYAGTLASGRVEVGQRVKVLPSGVESNVARIVTFDGDREEAFAGEAITLVLTDEIDISRGDLLLAADEALPAVQSASVDVVWMAEQPLSPGQSYDIKIAGKKTRARVDGIRYQVDINNLTQREVENLPLNGIGLVDLTFDEPLVLDRYQQNPVTGGLIFIDRLSNVTVGAGMVHEPVSQATAAPSEFSAFELELNALVRRHFPHWGARDLLGDK</sequence>